<gene>
    <name type="ordered locus">MPN_090</name>
    <name type="ORF">MP065</name>
    <name type="ORF">R02_orf329</name>
</gene>
<evidence type="ECO:0000255" key="1"/>
<evidence type="ECO:0000305" key="2"/>
<sequence length="329" mass="37433">MQTILTDQASFNILTSKRNLINKLTITNIVLWALFVFCAIATAFLAISHSFHKNFSFFLESGNSNNEGETTTKVNIHVLVAQILTPIFTVLLILCWMGNIGINSLLFGQLSICQQFQNEKKWLLWAIFIPQLTLTNSLLVREKLKNILDANSNSSTQKNRLTWWMIGFFVVWFIQLFLGFLIYLPAYSAEARLNLNLSFLSFALNSPLPVGHAANGYFFLGLIFAFMDLTIIVLLVISGFILKHLIQTNKTEHKKYQLMFFWTALAIDVIGLIMTISFIVVSFSLEKGDDYLLKTPFFGSSLMALITIATLVTTILLFIRFNKKRLLKD</sequence>
<feature type="chain" id="PRO_0000210640" description="Uncharacterized protein MPN_090">
    <location>
        <begin position="1"/>
        <end position="329"/>
    </location>
</feature>
<feature type="transmembrane region" description="Helical" evidence="1">
    <location>
        <begin position="29"/>
        <end position="49"/>
    </location>
</feature>
<feature type="transmembrane region" description="Helical" evidence="1">
    <location>
        <begin position="78"/>
        <end position="98"/>
    </location>
</feature>
<feature type="transmembrane region" description="Helical" evidence="1">
    <location>
        <begin position="120"/>
        <end position="140"/>
    </location>
</feature>
<feature type="transmembrane region" description="Helical" evidence="1">
    <location>
        <begin position="164"/>
        <end position="184"/>
    </location>
</feature>
<feature type="transmembrane region" description="Helical" evidence="1">
    <location>
        <begin position="217"/>
        <end position="237"/>
    </location>
</feature>
<feature type="transmembrane region" description="Helical" evidence="1">
    <location>
        <begin position="260"/>
        <end position="280"/>
    </location>
</feature>
<feature type="transmembrane region" description="Helical" evidence="1">
    <location>
        <begin position="299"/>
        <end position="319"/>
    </location>
</feature>
<dbReference type="EMBL" id="U00089">
    <property type="protein sequence ID" value="AAB95712.1"/>
    <property type="molecule type" value="Genomic_DNA"/>
</dbReference>
<dbReference type="PIR" id="S73391">
    <property type="entry name" value="S73391"/>
</dbReference>
<dbReference type="RefSeq" id="NP_109778.1">
    <property type="nucleotide sequence ID" value="NC_000912.1"/>
</dbReference>
<dbReference type="RefSeq" id="WP_010874447.1">
    <property type="nucleotide sequence ID" value="NZ_OU342337.1"/>
</dbReference>
<dbReference type="SMR" id="P75603"/>
<dbReference type="STRING" id="272634.MPN_090"/>
<dbReference type="EnsemblBacteria" id="AAB95712">
    <property type="protein sequence ID" value="AAB95712"/>
    <property type="gene ID" value="MPN_090"/>
</dbReference>
<dbReference type="KEGG" id="mpn:MPN_090"/>
<dbReference type="PATRIC" id="fig|272634.6.peg.89"/>
<dbReference type="HOGENOM" id="CLU_073036_0_0_14"/>
<dbReference type="BioCyc" id="MPNE272634:G1GJ3-145-MONOMER"/>
<dbReference type="Proteomes" id="UP000000808">
    <property type="component" value="Chromosome"/>
</dbReference>
<dbReference type="GO" id="GO:0005886">
    <property type="term" value="C:plasma membrane"/>
    <property type="evidence" value="ECO:0007669"/>
    <property type="project" value="UniProtKB-SubCell"/>
</dbReference>
<comment type="subcellular location">
    <subcellularLocation>
        <location evidence="2">Cell membrane</location>
        <topology evidence="2">Multi-pass membrane protein</topology>
    </subcellularLocation>
</comment>
<comment type="similarity">
    <text evidence="2">To M.pneumoniae MPN_129.</text>
</comment>
<reference key="1">
    <citation type="journal article" date="1996" name="Nucleic Acids Res.">
        <title>Complete sequence analysis of the genome of the bacterium Mycoplasma pneumoniae.</title>
        <authorList>
            <person name="Himmelreich R."/>
            <person name="Hilbert H."/>
            <person name="Plagens H."/>
            <person name="Pirkl E."/>
            <person name="Li B.-C."/>
            <person name="Herrmann R."/>
        </authorList>
    </citation>
    <scope>NUCLEOTIDE SEQUENCE [LARGE SCALE GENOMIC DNA]</scope>
    <source>
        <strain>ATCC 29342 / M129 / Subtype 1</strain>
    </source>
</reference>
<accession>P75603</accession>
<organism>
    <name type="scientific">Mycoplasma pneumoniae (strain ATCC 29342 / M129 / Subtype 1)</name>
    <name type="common">Mycoplasmoides pneumoniae</name>
    <dbReference type="NCBI Taxonomy" id="272634"/>
    <lineage>
        <taxon>Bacteria</taxon>
        <taxon>Bacillati</taxon>
        <taxon>Mycoplasmatota</taxon>
        <taxon>Mycoplasmoidales</taxon>
        <taxon>Mycoplasmoidaceae</taxon>
        <taxon>Mycoplasmoides</taxon>
    </lineage>
</organism>
<keyword id="KW-1003">Cell membrane</keyword>
<keyword id="KW-0472">Membrane</keyword>
<keyword id="KW-1185">Reference proteome</keyword>
<keyword id="KW-0812">Transmembrane</keyword>
<keyword id="KW-1133">Transmembrane helix</keyword>
<proteinExistence type="predicted"/>
<name>Y090_MYCPN</name>
<protein>
    <recommendedName>
        <fullName>Uncharacterized protein MPN_090</fullName>
    </recommendedName>
</protein>